<keyword id="KW-0997">Cell inner membrane</keyword>
<keyword id="KW-1003">Cell membrane</keyword>
<keyword id="KW-0472">Membrane</keyword>
<keyword id="KW-0520">NAD</keyword>
<keyword id="KW-0874">Quinone</keyword>
<keyword id="KW-1278">Translocase</keyword>
<keyword id="KW-0812">Transmembrane</keyword>
<keyword id="KW-1133">Transmembrane helix</keyword>
<keyword id="KW-0813">Transport</keyword>
<keyword id="KW-0830">Ubiquinone</keyword>
<organism>
    <name type="scientific">Francisella tularensis subsp. holarctica (strain OSU18)</name>
    <dbReference type="NCBI Taxonomy" id="393011"/>
    <lineage>
        <taxon>Bacteria</taxon>
        <taxon>Pseudomonadati</taxon>
        <taxon>Pseudomonadota</taxon>
        <taxon>Gammaproteobacteria</taxon>
        <taxon>Thiotrichales</taxon>
        <taxon>Francisellaceae</taxon>
        <taxon>Francisella</taxon>
    </lineage>
</organism>
<proteinExistence type="inferred from homology"/>
<evidence type="ECO:0000255" key="1">
    <source>
        <dbReference type="HAMAP-Rule" id="MF_01456"/>
    </source>
</evidence>
<reference key="1">
    <citation type="journal article" date="2006" name="J. Bacteriol.">
        <title>Chromosome rearrangement and diversification of Francisella tularensis revealed by the type B (OSU18) genome sequence.</title>
        <authorList>
            <person name="Petrosino J.F."/>
            <person name="Xiang Q."/>
            <person name="Karpathy S.E."/>
            <person name="Jiang H."/>
            <person name="Yerrapragada S."/>
            <person name="Liu Y."/>
            <person name="Gioia J."/>
            <person name="Hemphill L."/>
            <person name="Gonzalez A."/>
            <person name="Raghavan T.M."/>
            <person name="Uzman A."/>
            <person name="Fox G.E."/>
            <person name="Highlander S."/>
            <person name="Reichard M."/>
            <person name="Morton R.J."/>
            <person name="Clinkenbeard K.D."/>
            <person name="Weinstock G.M."/>
        </authorList>
    </citation>
    <scope>NUCLEOTIDE SEQUENCE [LARGE SCALE GENOMIC DNA]</scope>
    <source>
        <strain>OSU18</strain>
    </source>
</reference>
<sequence>MRALKMNSISVSVTHGLIFSILLFVISVAGIIINRRNILILLMSIELMLLAVNTNFLIFANMHQQAMGGVFVFFIMAVAAAETAIGLAIVVAIFRKRKTIDLSKLNTLRG</sequence>
<dbReference type="EC" id="7.1.1.-" evidence="1"/>
<dbReference type="EMBL" id="CP000437">
    <property type="protein sequence ID" value="ABI83523.1"/>
    <property type="molecule type" value="Genomic_DNA"/>
</dbReference>
<dbReference type="RefSeq" id="WP_003017371.1">
    <property type="nucleotide sequence ID" value="NC_017463.1"/>
</dbReference>
<dbReference type="SMR" id="Q0BK61"/>
<dbReference type="KEGG" id="fth:FTH_1756"/>
<dbReference type="GO" id="GO:0030964">
    <property type="term" value="C:NADH dehydrogenase complex"/>
    <property type="evidence" value="ECO:0007669"/>
    <property type="project" value="TreeGrafter"/>
</dbReference>
<dbReference type="GO" id="GO:0005886">
    <property type="term" value="C:plasma membrane"/>
    <property type="evidence" value="ECO:0007669"/>
    <property type="project" value="UniProtKB-SubCell"/>
</dbReference>
<dbReference type="GO" id="GO:0050136">
    <property type="term" value="F:NADH:ubiquinone reductase (non-electrogenic) activity"/>
    <property type="evidence" value="ECO:0007669"/>
    <property type="project" value="UniProtKB-UniRule"/>
</dbReference>
<dbReference type="GO" id="GO:0048038">
    <property type="term" value="F:quinone binding"/>
    <property type="evidence" value="ECO:0007669"/>
    <property type="project" value="UniProtKB-KW"/>
</dbReference>
<dbReference type="GO" id="GO:0042773">
    <property type="term" value="P:ATP synthesis coupled electron transport"/>
    <property type="evidence" value="ECO:0007669"/>
    <property type="project" value="InterPro"/>
</dbReference>
<dbReference type="FunFam" id="1.10.287.3510:FF:000001">
    <property type="entry name" value="NADH-quinone oxidoreductase subunit K"/>
    <property type="match status" value="1"/>
</dbReference>
<dbReference type="Gene3D" id="1.10.287.3510">
    <property type="match status" value="1"/>
</dbReference>
<dbReference type="HAMAP" id="MF_01456">
    <property type="entry name" value="NDH1_NuoK"/>
    <property type="match status" value="1"/>
</dbReference>
<dbReference type="InterPro" id="IPR001133">
    <property type="entry name" value="NADH_UbQ_OxRdtase_chain4L/K"/>
</dbReference>
<dbReference type="InterPro" id="IPR039428">
    <property type="entry name" value="NUOK/Mnh_C1-like"/>
</dbReference>
<dbReference type="NCBIfam" id="NF004320">
    <property type="entry name" value="PRK05715.1-2"/>
    <property type="match status" value="1"/>
</dbReference>
<dbReference type="NCBIfam" id="NF004321">
    <property type="entry name" value="PRK05715.1-3"/>
    <property type="match status" value="1"/>
</dbReference>
<dbReference type="NCBIfam" id="NF004323">
    <property type="entry name" value="PRK05715.1-5"/>
    <property type="match status" value="1"/>
</dbReference>
<dbReference type="PANTHER" id="PTHR11434:SF16">
    <property type="entry name" value="NADH-UBIQUINONE OXIDOREDUCTASE CHAIN 4L"/>
    <property type="match status" value="1"/>
</dbReference>
<dbReference type="PANTHER" id="PTHR11434">
    <property type="entry name" value="NADH-UBIQUINONE OXIDOREDUCTASE SUBUNIT ND4L"/>
    <property type="match status" value="1"/>
</dbReference>
<dbReference type="Pfam" id="PF00420">
    <property type="entry name" value="Oxidored_q2"/>
    <property type="match status" value="1"/>
</dbReference>
<name>NUOK_FRATO</name>
<gene>
    <name evidence="1" type="primary">nuoK</name>
    <name type="ordered locus">FTH_1756</name>
</gene>
<protein>
    <recommendedName>
        <fullName evidence="1">NADH-quinone oxidoreductase subunit K</fullName>
        <ecNumber evidence="1">7.1.1.-</ecNumber>
    </recommendedName>
    <alternativeName>
        <fullName evidence="1">NADH dehydrogenase I subunit K</fullName>
    </alternativeName>
    <alternativeName>
        <fullName evidence="1">NDH-1 subunit K</fullName>
    </alternativeName>
</protein>
<comment type="function">
    <text evidence="1">NDH-1 shuttles electrons from NADH, via FMN and iron-sulfur (Fe-S) centers, to quinones in the respiratory chain. The immediate electron acceptor for the enzyme in this species is believed to be ubiquinone. Couples the redox reaction to proton translocation (for every two electrons transferred, four hydrogen ions are translocated across the cytoplasmic membrane), and thus conserves the redox energy in a proton gradient.</text>
</comment>
<comment type="catalytic activity">
    <reaction evidence="1">
        <text>a quinone + NADH + 5 H(+)(in) = a quinol + NAD(+) + 4 H(+)(out)</text>
        <dbReference type="Rhea" id="RHEA:57888"/>
        <dbReference type="ChEBI" id="CHEBI:15378"/>
        <dbReference type="ChEBI" id="CHEBI:24646"/>
        <dbReference type="ChEBI" id="CHEBI:57540"/>
        <dbReference type="ChEBI" id="CHEBI:57945"/>
        <dbReference type="ChEBI" id="CHEBI:132124"/>
    </reaction>
</comment>
<comment type="subunit">
    <text evidence="1">NDH-1 is composed of 14 different subunits. Subunits NuoA, H, J, K, L, M, N constitute the membrane sector of the complex.</text>
</comment>
<comment type="subcellular location">
    <subcellularLocation>
        <location evidence="1">Cell inner membrane</location>
        <topology evidence="1">Multi-pass membrane protein</topology>
    </subcellularLocation>
</comment>
<comment type="similarity">
    <text evidence="1">Belongs to the complex I subunit 4L family.</text>
</comment>
<feature type="chain" id="PRO_0000390066" description="NADH-quinone oxidoreductase subunit K">
    <location>
        <begin position="1"/>
        <end position="110"/>
    </location>
</feature>
<feature type="transmembrane region" description="Helical" evidence="1">
    <location>
        <begin position="13"/>
        <end position="33"/>
    </location>
</feature>
<feature type="transmembrane region" description="Helical" evidence="1">
    <location>
        <begin position="38"/>
        <end position="58"/>
    </location>
</feature>
<feature type="transmembrane region" description="Helical" evidence="1">
    <location>
        <begin position="70"/>
        <end position="90"/>
    </location>
</feature>
<accession>Q0BK61</accession>